<proteinExistence type="inferred from homology"/>
<feature type="chain" id="PRO_0000075251" description="Alanine--tRNA ligase">
    <location>
        <begin position="1"/>
        <end position="882"/>
    </location>
</feature>
<feature type="binding site" evidence="1">
    <location>
        <position position="570"/>
    </location>
    <ligand>
        <name>Zn(2+)</name>
        <dbReference type="ChEBI" id="CHEBI:29105"/>
    </ligand>
</feature>
<feature type="binding site" evidence="1">
    <location>
        <position position="574"/>
    </location>
    <ligand>
        <name>Zn(2+)</name>
        <dbReference type="ChEBI" id="CHEBI:29105"/>
    </ligand>
</feature>
<feature type="binding site" evidence="1">
    <location>
        <position position="672"/>
    </location>
    <ligand>
        <name>Zn(2+)</name>
        <dbReference type="ChEBI" id="CHEBI:29105"/>
    </ligand>
</feature>
<feature type="binding site" evidence="1">
    <location>
        <position position="676"/>
    </location>
    <ligand>
        <name>Zn(2+)</name>
        <dbReference type="ChEBI" id="CHEBI:29105"/>
    </ligand>
</feature>
<evidence type="ECO:0000255" key="1">
    <source>
        <dbReference type="HAMAP-Rule" id="MF_00036"/>
    </source>
</evidence>
<name>SYA_XANCP</name>
<gene>
    <name evidence="1" type="primary">alaS</name>
    <name type="ordered locus">XCC1724</name>
</gene>
<keyword id="KW-0030">Aminoacyl-tRNA synthetase</keyword>
<keyword id="KW-0067">ATP-binding</keyword>
<keyword id="KW-0963">Cytoplasm</keyword>
<keyword id="KW-0436">Ligase</keyword>
<keyword id="KW-0479">Metal-binding</keyword>
<keyword id="KW-0547">Nucleotide-binding</keyword>
<keyword id="KW-0648">Protein biosynthesis</keyword>
<keyword id="KW-1185">Reference proteome</keyword>
<keyword id="KW-0694">RNA-binding</keyword>
<keyword id="KW-0820">tRNA-binding</keyword>
<keyword id="KW-0862">Zinc</keyword>
<protein>
    <recommendedName>
        <fullName evidence="1">Alanine--tRNA ligase</fullName>
        <ecNumber evidence="1">6.1.1.7</ecNumber>
    </recommendedName>
    <alternativeName>
        <fullName evidence="1">Alanyl-tRNA synthetase</fullName>
        <shortName evidence="1">AlaRS</shortName>
    </alternativeName>
</protein>
<organism>
    <name type="scientific">Xanthomonas campestris pv. campestris (strain ATCC 33913 / DSM 3586 / NCPPB 528 / LMG 568 / P 25)</name>
    <dbReference type="NCBI Taxonomy" id="190485"/>
    <lineage>
        <taxon>Bacteria</taxon>
        <taxon>Pseudomonadati</taxon>
        <taxon>Pseudomonadota</taxon>
        <taxon>Gammaproteobacteria</taxon>
        <taxon>Lysobacterales</taxon>
        <taxon>Lysobacteraceae</taxon>
        <taxon>Xanthomonas</taxon>
    </lineage>
</organism>
<accession>Q8P9X0</accession>
<comment type="function">
    <text evidence="1">Catalyzes the attachment of alanine to tRNA(Ala) in a two-step reaction: alanine is first activated by ATP to form Ala-AMP and then transferred to the acceptor end of tRNA(Ala). Also edits incorrectly charged Ser-tRNA(Ala) and Gly-tRNA(Ala) via its editing domain.</text>
</comment>
<comment type="catalytic activity">
    <reaction evidence="1">
        <text>tRNA(Ala) + L-alanine + ATP = L-alanyl-tRNA(Ala) + AMP + diphosphate</text>
        <dbReference type="Rhea" id="RHEA:12540"/>
        <dbReference type="Rhea" id="RHEA-COMP:9657"/>
        <dbReference type="Rhea" id="RHEA-COMP:9923"/>
        <dbReference type="ChEBI" id="CHEBI:30616"/>
        <dbReference type="ChEBI" id="CHEBI:33019"/>
        <dbReference type="ChEBI" id="CHEBI:57972"/>
        <dbReference type="ChEBI" id="CHEBI:78442"/>
        <dbReference type="ChEBI" id="CHEBI:78497"/>
        <dbReference type="ChEBI" id="CHEBI:456215"/>
        <dbReference type="EC" id="6.1.1.7"/>
    </reaction>
</comment>
<comment type="cofactor">
    <cofactor evidence="1">
        <name>Zn(2+)</name>
        <dbReference type="ChEBI" id="CHEBI:29105"/>
    </cofactor>
    <text evidence="1">Binds 1 zinc ion per subunit.</text>
</comment>
<comment type="subcellular location">
    <subcellularLocation>
        <location evidence="1">Cytoplasm</location>
    </subcellularLocation>
</comment>
<comment type="domain">
    <text evidence="1">Consists of three domains; the N-terminal catalytic domain, the editing domain and the C-terminal C-Ala domain. The editing domain removes incorrectly charged amino acids, while the C-Ala domain, along with tRNA(Ala), serves as a bridge to cooperatively bring together the editing and aminoacylation centers thus stimulating deacylation of misacylated tRNAs.</text>
</comment>
<comment type="similarity">
    <text evidence="1">Belongs to the class-II aminoacyl-tRNA synthetase family.</text>
</comment>
<sequence length="882" mass="95275">MNAPAKFSTSQIRSDFLAFFEGKGHTIVPSAPLVPGNDPTLLFTNSGMVQFKDVFLGAEKRSYVRAADVQRCLRAGGKHNDLDSVGYTARHHTFFEMLGNWSFGDYFKKDAIAWAWELLTQVWKLPADRLLVTVYHTDEEAFELWRDMIGIPESRIVRIGDNKGAPYASDNFWQMADTGPCGPCTEIFFDHGDHIAGGPPGSPDEDGDRFIEIWNLVFMQFDRQPDGTLVALPAPCVDTGMGLERLAAILQHVHTNYEIDVFQALIGKASALTGIADLENKSLRVIADHIRACSFLIVDGVLPSNEGRGYVLRRIIRRALRHGWMLGVRQLFFSKMVPTLVELMGEAYPELVVAQETVARALLAEEERFAETLDAGMKIFDDVASRSQEIIPGADAFRLYDTYGFPVDLTADIARERGMRVDMEGFEFAMERQRETARAAGKFGGGVALPADLVATMAPTVFLGYEAQDADALKVVALLKQGRPVDRAEAGDEVIVFTDRTPFYAESGGQVGDSGQLSGTDVSIEVADTQKFAGQFHGHVGRIAEGALKLGDVLSGGIDVQRRGKTILNHSATHLLHAALREVLGTHVQQKGSLVAPDRLRFDFSHFQPITAEELAVIERKVNAEVRTNHSVEVHNMAMQEALDFGAMALFGEKYGERVRVLKMGGYSTELCGGTHVSRTGDIGLFKITSEGGVSSGVRRIEAVTGQGALDYVAEEERRLGEAANLLGGNSTEIVDKVRALTDRQKRLERELESLKAKLASGATADLGASAVDVAGVKVIAVRLEGFDAKALREAMDRLKQQLGDSVIVLAGAAGGKVALVAGVNGSPTGKVKAGELLGHIASQIGGKGGGRPDLAQGGGEDGPALATALQGVPSWVKQHLG</sequence>
<dbReference type="EC" id="6.1.1.7" evidence="1"/>
<dbReference type="EMBL" id="AE008922">
    <property type="protein sequence ID" value="AAM41018.1"/>
    <property type="molecule type" value="Genomic_DNA"/>
</dbReference>
<dbReference type="RefSeq" id="NP_637094.1">
    <property type="nucleotide sequence ID" value="NC_003902.1"/>
</dbReference>
<dbReference type="RefSeq" id="WP_011036901.1">
    <property type="nucleotide sequence ID" value="NC_003902.1"/>
</dbReference>
<dbReference type="SMR" id="Q8P9X0"/>
<dbReference type="STRING" id="190485.XCC1724"/>
<dbReference type="EnsemblBacteria" id="AAM41018">
    <property type="protein sequence ID" value="AAM41018"/>
    <property type="gene ID" value="XCC1724"/>
</dbReference>
<dbReference type="KEGG" id="xcc:XCC1724"/>
<dbReference type="PATRIC" id="fig|190485.4.peg.1841"/>
<dbReference type="eggNOG" id="COG0013">
    <property type="taxonomic scope" value="Bacteria"/>
</dbReference>
<dbReference type="HOGENOM" id="CLU_004485_1_1_6"/>
<dbReference type="OrthoDB" id="9803884at2"/>
<dbReference type="Proteomes" id="UP000001010">
    <property type="component" value="Chromosome"/>
</dbReference>
<dbReference type="GO" id="GO:0005829">
    <property type="term" value="C:cytosol"/>
    <property type="evidence" value="ECO:0000318"/>
    <property type="project" value="GO_Central"/>
</dbReference>
<dbReference type="GO" id="GO:0004813">
    <property type="term" value="F:alanine-tRNA ligase activity"/>
    <property type="evidence" value="ECO:0000318"/>
    <property type="project" value="GO_Central"/>
</dbReference>
<dbReference type="GO" id="GO:0002161">
    <property type="term" value="F:aminoacyl-tRNA deacylase activity"/>
    <property type="evidence" value="ECO:0000318"/>
    <property type="project" value="GO_Central"/>
</dbReference>
<dbReference type="GO" id="GO:0005524">
    <property type="term" value="F:ATP binding"/>
    <property type="evidence" value="ECO:0007669"/>
    <property type="project" value="UniProtKB-UniRule"/>
</dbReference>
<dbReference type="GO" id="GO:0000049">
    <property type="term" value="F:tRNA binding"/>
    <property type="evidence" value="ECO:0007669"/>
    <property type="project" value="UniProtKB-KW"/>
</dbReference>
<dbReference type="GO" id="GO:0008270">
    <property type="term" value="F:zinc ion binding"/>
    <property type="evidence" value="ECO:0007669"/>
    <property type="project" value="UniProtKB-UniRule"/>
</dbReference>
<dbReference type="GO" id="GO:0006419">
    <property type="term" value="P:alanyl-tRNA aminoacylation"/>
    <property type="evidence" value="ECO:0000318"/>
    <property type="project" value="GO_Central"/>
</dbReference>
<dbReference type="GO" id="GO:0045892">
    <property type="term" value="P:negative regulation of DNA-templated transcription"/>
    <property type="evidence" value="ECO:0000318"/>
    <property type="project" value="GO_Central"/>
</dbReference>
<dbReference type="CDD" id="cd00673">
    <property type="entry name" value="AlaRS_core"/>
    <property type="match status" value="1"/>
</dbReference>
<dbReference type="FunFam" id="2.40.30.130:FF:000001">
    <property type="entry name" value="Alanine--tRNA ligase"/>
    <property type="match status" value="1"/>
</dbReference>
<dbReference type="FunFam" id="3.10.310.40:FF:000001">
    <property type="entry name" value="Alanine--tRNA ligase"/>
    <property type="match status" value="1"/>
</dbReference>
<dbReference type="FunFam" id="3.30.54.20:FF:000001">
    <property type="entry name" value="Alanine--tRNA ligase"/>
    <property type="match status" value="1"/>
</dbReference>
<dbReference type="FunFam" id="3.30.930.10:FF:000004">
    <property type="entry name" value="Alanine--tRNA ligase"/>
    <property type="match status" value="1"/>
</dbReference>
<dbReference type="FunFam" id="3.30.980.10:FF:000004">
    <property type="entry name" value="Alanine--tRNA ligase, cytoplasmic"/>
    <property type="match status" value="1"/>
</dbReference>
<dbReference type="Gene3D" id="2.40.30.130">
    <property type="match status" value="1"/>
</dbReference>
<dbReference type="Gene3D" id="3.10.310.40">
    <property type="match status" value="1"/>
</dbReference>
<dbReference type="Gene3D" id="3.30.54.20">
    <property type="match status" value="1"/>
</dbReference>
<dbReference type="Gene3D" id="6.10.250.550">
    <property type="match status" value="1"/>
</dbReference>
<dbReference type="Gene3D" id="3.30.930.10">
    <property type="entry name" value="Bira Bifunctional Protein, Domain 2"/>
    <property type="match status" value="1"/>
</dbReference>
<dbReference type="Gene3D" id="3.30.980.10">
    <property type="entry name" value="Threonyl-trna Synthetase, Chain A, domain 2"/>
    <property type="match status" value="1"/>
</dbReference>
<dbReference type="HAMAP" id="MF_00036_B">
    <property type="entry name" value="Ala_tRNA_synth_B"/>
    <property type="match status" value="1"/>
</dbReference>
<dbReference type="InterPro" id="IPR045864">
    <property type="entry name" value="aa-tRNA-synth_II/BPL/LPL"/>
</dbReference>
<dbReference type="InterPro" id="IPR002318">
    <property type="entry name" value="Ala-tRNA-lgiase_IIc"/>
</dbReference>
<dbReference type="InterPro" id="IPR018162">
    <property type="entry name" value="Ala-tRNA-ligase_IIc_anticod-bd"/>
</dbReference>
<dbReference type="InterPro" id="IPR018165">
    <property type="entry name" value="Ala-tRNA-synth_IIc_core"/>
</dbReference>
<dbReference type="InterPro" id="IPR018164">
    <property type="entry name" value="Ala-tRNA-synth_IIc_N"/>
</dbReference>
<dbReference type="InterPro" id="IPR050058">
    <property type="entry name" value="Ala-tRNA_ligase"/>
</dbReference>
<dbReference type="InterPro" id="IPR023033">
    <property type="entry name" value="Ala_tRNA_ligase_euk/bac"/>
</dbReference>
<dbReference type="InterPro" id="IPR003156">
    <property type="entry name" value="DHHA1_dom"/>
</dbReference>
<dbReference type="InterPro" id="IPR018163">
    <property type="entry name" value="Thr/Ala-tRNA-synth_IIc_edit"/>
</dbReference>
<dbReference type="InterPro" id="IPR009000">
    <property type="entry name" value="Transl_B-barrel_sf"/>
</dbReference>
<dbReference type="InterPro" id="IPR012947">
    <property type="entry name" value="tRNA_SAD"/>
</dbReference>
<dbReference type="NCBIfam" id="TIGR00344">
    <property type="entry name" value="alaS"/>
    <property type="match status" value="1"/>
</dbReference>
<dbReference type="PANTHER" id="PTHR11777:SF9">
    <property type="entry name" value="ALANINE--TRNA LIGASE, CYTOPLASMIC"/>
    <property type="match status" value="1"/>
</dbReference>
<dbReference type="PANTHER" id="PTHR11777">
    <property type="entry name" value="ALANYL-TRNA SYNTHETASE"/>
    <property type="match status" value="1"/>
</dbReference>
<dbReference type="Pfam" id="PF02272">
    <property type="entry name" value="DHHA1"/>
    <property type="match status" value="1"/>
</dbReference>
<dbReference type="Pfam" id="PF01411">
    <property type="entry name" value="tRNA-synt_2c"/>
    <property type="match status" value="1"/>
</dbReference>
<dbReference type="Pfam" id="PF07973">
    <property type="entry name" value="tRNA_SAD"/>
    <property type="match status" value="1"/>
</dbReference>
<dbReference type="PRINTS" id="PR00980">
    <property type="entry name" value="TRNASYNTHALA"/>
</dbReference>
<dbReference type="SMART" id="SM00863">
    <property type="entry name" value="tRNA_SAD"/>
    <property type="match status" value="1"/>
</dbReference>
<dbReference type="SUPFAM" id="SSF55681">
    <property type="entry name" value="Class II aaRS and biotin synthetases"/>
    <property type="match status" value="1"/>
</dbReference>
<dbReference type="SUPFAM" id="SSF101353">
    <property type="entry name" value="Putative anticodon-binding domain of alanyl-tRNA synthetase (AlaRS)"/>
    <property type="match status" value="1"/>
</dbReference>
<dbReference type="SUPFAM" id="SSF55186">
    <property type="entry name" value="ThrRS/AlaRS common domain"/>
    <property type="match status" value="1"/>
</dbReference>
<dbReference type="SUPFAM" id="SSF50447">
    <property type="entry name" value="Translation proteins"/>
    <property type="match status" value="1"/>
</dbReference>
<dbReference type="PROSITE" id="PS50860">
    <property type="entry name" value="AA_TRNA_LIGASE_II_ALA"/>
    <property type="match status" value="1"/>
</dbReference>
<reference key="1">
    <citation type="journal article" date="2002" name="Nature">
        <title>Comparison of the genomes of two Xanthomonas pathogens with differing host specificities.</title>
        <authorList>
            <person name="da Silva A.C.R."/>
            <person name="Ferro J.A."/>
            <person name="Reinach F.C."/>
            <person name="Farah C.S."/>
            <person name="Furlan L.R."/>
            <person name="Quaggio R.B."/>
            <person name="Monteiro-Vitorello C.B."/>
            <person name="Van Sluys M.A."/>
            <person name="Almeida N.F. Jr."/>
            <person name="Alves L.M.C."/>
            <person name="do Amaral A.M."/>
            <person name="Bertolini M.C."/>
            <person name="Camargo L.E.A."/>
            <person name="Camarotte G."/>
            <person name="Cannavan F."/>
            <person name="Cardozo J."/>
            <person name="Chambergo F."/>
            <person name="Ciapina L.P."/>
            <person name="Cicarelli R.M.B."/>
            <person name="Coutinho L.L."/>
            <person name="Cursino-Santos J.R."/>
            <person name="El-Dorry H."/>
            <person name="Faria J.B."/>
            <person name="Ferreira A.J.S."/>
            <person name="Ferreira R.C.C."/>
            <person name="Ferro M.I.T."/>
            <person name="Formighieri E.F."/>
            <person name="Franco M.C."/>
            <person name="Greggio C.C."/>
            <person name="Gruber A."/>
            <person name="Katsuyama A.M."/>
            <person name="Kishi L.T."/>
            <person name="Leite R.P."/>
            <person name="Lemos E.G.M."/>
            <person name="Lemos M.V.F."/>
            <person name="Locali E.C."/>
            <person name="Machado M.A."/>
            <person name="Madeira A.M.B.N."/>
            <person name="Martinez-Rossi N.M."/>
            <person name="Martins E.C."/>
            <person name="Meidanis J."/>
            <person name="Menck C.F.M."/>
            <person name="Miyaki C.Y."/>
            <person name="Moon D.H."/>
            <person name="Moreira L.M."/>
            <person name="Novo M.T.M."/>
            <person name="Okura V.K."/>
            <person name="Oliveira M.C."/>
            <person name="Oliveira V.R."/>
            <person name="Pereira H.A."/>
            <person name="Rossi A."/>
            <person name="Sena J.A.D."/>
            <person name="Silva C."/>
            <person name="de Souza R.F."/>
            <person name="Spinola L.A.F."/>
            <person name="Takita M.A."/>
            <person name="Tamura R.E."/>
            <person name="Teixeira E.C."/>
            <person name="Tezza R.I.D."/>
            <person name="Trindade dos Santos M."/>
            <person name="Truffi D."/>
            <person name="Tsai S.M."/>
            <person name="White F.F."/>
            <person name="Setubal J.C."/>
            <person name="Kitajima J.P."/>
        </authorList>
    </citation>
    <scope>NUCLEOTIDE SEQUENCE [LARGE SCALE GENOMIC DNA]</scope>
    <source>
        <strain>ATCC 33913 / DSM 3586 / NCPPB 528 / LMG 568 / P 25</strain>
    </source>
</reference>